<gene>
    <name evidence="2" type="primary">infB</name>
    <name type="ordered locus">PMM1494</name>
</gene>
<keyword id="KW-0963">Cytoplasm</keyword>
<keyword id="KW-0342">GTP-binding</keyword>
<keyword id="KW-0396">Initiation factor</keyword>
<keyword id="KW-0547">Nucleotide-binding</keyword>
<keyword id="KW-0648">Protein biosynthesis</keyword>
<comment type="function">
    <text evidence="2">One of the essential components for the initiation of protein synthesis. Protects formylmethionyl-tRNA from spontaneous hydrolysis and promotes its binding to the 30S ribosomal subunits. Also involved in the hydrolysis of GTP during the formation of the 70S ribosomal complex.</text>
</comment>
<comment type="subcellular location">
    <subcellularLocation>
        <location evidence="2">Cytoplasm</location>
    </subcellularLocation>
</comment>
<comment type="similarity">
    <text evidence="2">Belongs to the TRAFAC class translation factor GTPase superfamily. Classic translation factor GTPase family. IF-2 subfamily.</text>
</comment>
<accession>Q7UZZ9</accession>
<evidence type="ECO:0000250" key="1"/>
<evidence type="ECO:0000255" key="2">
    <source>
        <dbReference type="HAMAP-Rule" id="MF_00100"/>
    </source>
</evidence>
<evidence type="ECO:0000256" key="3">
    <source>
        <dbReference type="SAM" id="MobiDB-lite"/>
    </source>
</evidence>
<proteinExistence type="inferred from homology"/>
<name>IF2_PROMP</name>
<organism>
    <name type="scientific">Prochlorococcus marinus subsp. pastoris (strain CCMP1986 / NIES-2087 / MED4)</name>
    <dbReference type="NCBI Taxonomy" id="59919"/>
    <lineage>
        <taxon>Bacteria</taxon>
        <taxon>Bacillati</taxon>
        <taxon>Cyanobacteriota</taxon>
        <taxon>Cyanophyceae</taxon>
        <taxon>Synechococcales</taxon>
        <taxon>Prochlorococcaceae</taxon>
        <taxon>Prochlorococcus</taxon>
    </lineage>
</organism>
<feature type="chain" id="PRO_0000137235" description="Translation initiation factor IF-2">
    <location>
        <begin position="1"/>
        <end position="1169"/>
    </location>
</feature>
<feature type="domain" description="tr-type G">
    <location>
        <begin position="661"/>
        <end position="838"/>
    </location>
</feature>
<feature type="region of interest" description="Disordered" evidence="3">
    <location>
        <begin position="69"/>
        <end position="108"/>
    </location>
</feature>
<feature type="region of interest" description="Disordered" evidence="3">
    <location>
        <begin position="139"/>
        <end position="568"/>
    </location>
</feature>
<feature type="region of interest" description="G1" evidence="1">
    <location>
        <begin position="670"/>
        <end position="677"/>
    </location>
</feature>
<feature type="region of interest" description="G2" evidence="1">
    <location>
        <begin position="695"/>
        <end position="699"/>
    </location>
</feature>
<feature type="region of interest" description="G3" evidence="1">
    <location>
        <begin position="720"/>
        <end position="723"/>
    </location>
</feature>
<feature type="region of interest" description="G4" evidence="1">
    <location>
        <begin position="774"/>
        <end position="777"/>
    </location>
</feature>
<feature type="region of interest" description="G5" evidence="1">
    <location>
        <begin position="810"/>
        <end position="812"/>
    </location>
</feature>
<feature type="compositionally biased region" description="Basic and acidic residues" evidence="3">
    <location>
        <begin position="71"/>
        <end position="83"/>
    </location>
</feature>
<feature type="compositionally biased region" description="Basic and acidic residues" evidence="3">
    <location>
        <begin position="92"/>
        <end position="102"/>
    </location>
</feature>
<feature type="compositionally biased region" description="Polar residues" evidence="3">
    <location>
        <begin position="139"/>
        <end position="156"/>
    </location>
</feature>
<feature type="compositionally biased region" description="Basic and acidic residues" evidence="3">
    <location>
        <begin position="157"/>
        <end position="171"/>
    </location>
</feature>
<feature type="compositionally biased region" description="Low complexity" evidence="3">
    <location>
        <begin position="196"/>
        <end position="214"/>
    </location>
</feature>
<feature type="compositionally biased region" description="Polar residues" evidence="3">
    <location>
        <begin position="231"/>
        <end position="248"/>
    </location>
</feature>
<feature type="compositionally biased region" description="Low complexity" evidence="3">
    <location>
        <begin position="265"/>
        <end position="281"/>
    </location>
</feature>
<feature type="compositionally biased region" description="Polar residues" evidence="3">
    <location>
        <begin position="282"/>
        <end position="294"/>
    </location>
</feature>
<feature type="compositionally biased region" description="Polar residues" evidence="3">
    <location>
        <begin position="412"/>
        <end position="432"/>
    </location>
</feature>
<feature type="compositionally biased region" description="Polar residues" evidence="3">
    <location>
        <begin position="439"/>
        <end position="455"/>
    </location>
</feature>
<feature type="compositionally biased region" description="Basic and acidic residues" evidence="3">
    <location>
        <begin position="472"/>
        <end position="486"/>
    </location>
</feature>
<feature type="compositionally biased region" description="Basic residues" evidence="3">
    <location>
        <begin position="544"/>
        <end position="560"/>
    </location>
</feature>
<feature type="binding site" evidence="2">
    <location>
        <begin position="670"/>
        <end position="677"/>
    </location>
    <ligand>
        <name>GTP</name>
        <dbReference type="ChEBI" id="CHEBI:37565"/>
    </ligand>
</feature>
<feature type="binding site" evidence="2">
    <location>
        <begin position="720"/>
        <end position="724"/>
    </location>
    <ligand>
        <name>GTP</name>
        <dbReference type="ChEBI" id="CHEBI:37565"/>
    </ligand>
</feature>
<feature type="binding site" evidence="2">
    <location>
        <begin position="774"/>
        <end position="777"/>
    </location>
    <ligand>
        <name>GTP</name>
        <dbReference type="ChEBI" id="CHEBI:37565"/>
    </ligand>
</feature>
<dbReference type="EMBL" id="BX548174">
    <property type="protein sequence ID" value="CAE19953.1"/>
    <property type="molecule type" value="Genomic_DNA"/>
</dbReference>
<dbReference type="RefSeq" id="WP_011133122.1">
    <property type="nucleotide sequence ID" value="NC_005072.1"/>
</dbReference>
<dbReference type="SMR" id="Q7UZZ9"/>
<dbReference type="STRING" id="59919.PMM1494"/>
<dbReference type="KEGG" id="pmm:PMM1494"/>
<dbReference type="eggNOG" id="COG0532">
    <property type="taxonomic scope" value="Bacteria"/>
</dbReference>
<dbReference type="HOGENOM" id="CLU_006301_7_0_3"/>
<dbReference type="OrthoDB" id="9811804at2"/>
<dbReference type="Proteomes" id="UP000001026">
    <property type="component" value="Chromosome"/>
</dbReference>
<dbReference type="GO" id="GO:0005829">
    <property type="term" value="C:cytosol"/>
    <property type="evidence" value="ECO:0007669"/>
    <property type="project" value="TreeGrafter"/>
</dbReference>
<dbReference type="GO" id="GO:0005525">
    <property type="term" value="F:GTP binding"/>
    <property type="evidence" value="ECO:0007669"/>
    <property type="project" value="UniProtKB-KW"/>
</dbReference>
<dbReference type="GO" id="GO:0003924">
    <property type="term" value="F:GTPase activity"/>
    <property type="evidence" value="ECO:0007669"/>
    <property type="project" value="UniProtKB-UniRule"/>
</dbReference>
<dbReference type="GO" id="GO:0003743">
    <property type="term" value="F:translation initiation factor activity"/>
    <property type="evidence" value="ECO:0007669"/>
    <property type="project" value="UniProtKB-UniRule"/>
</dbReference>
<dbReference type="CDD" id="cd01887">
    <property type="entry name" value="IF2_eIF5B"/>
    <property type="match status" value="1"/>
</dbReference>
<dbReference type="CDD" id="cd03702">
    <property type="entry name" value="IF2_mtIF2_II"/>
    <property type="match status" value="1"/>
</dbReference>
<dbReference type="CDD" id="cd03692">
    <property type="entry name" value="mtIF2_IVc"/>
    <property type="match status" value="1"/>
</dbReference>
<dbReference type="FunFam" id="2.40.30.10:FF:000007">
    <property type="entry name" value="Translation initiation factor IF-2"/>
    <property type="match status" value="1"/>
</dbReference>
<dbReference type="FunFam" id="2.40.30.10:FF:000008">
    <property type="entry name" value="Translation initiation factor IF-2"/>
    <property type="match status" value="1"/>
</dbReference>
<dbReference type="FunFam" id="3.40.50.10050:FF:000001">
    <property type="entry name" value="Translation initiation factor IF-2"/>
    <property type="match status" value="1"/>
</dbReference>
<dbReference type="FunFam" id="3.40.50.300:FF:000019">
    <property type="entry name" value="Translation initiation factor IF-2"/>
    <property type="match status" value="1"/>
</dbReference>
<dbReference type="Gene3D" id="1.10.10.2480">
    <property type="match status" value="1"/>
</dbReference>
<dbReference type="Gene3D" id="3.40.50.300">
    <property type="entry name" value="P-loop containing nucleotide triphosphate hydrolases"/>
    <property type="match status" value="1"/>
</dbReference>
<dbReference type="Gene3D" id="2.40.30.10">
    <property type="entry name" value="Translation factors"/>
    <property type="match status" value="2"/>
</dbReference>
<dbReference type="Gene3D" id="3.40.50.10050">
    <property type="entry name" value="Translation initiation factor IF- 2, domain 3"/>
    <property type="match status" value="1"/>
</dbReference>
<dbReference type="HAMAP" id="MF_00100_B">
    <property type="entry name" value="IF_2_B"/>
    <property type="match status" value="1"/>
</dbReference>
<dbReference type="InterPro" id="IPR053905">
    <property type="entry name" value="EF-G-like_DII"/>
</dbReference>
<dbReference type="InterPro" id="IPR044145">
    <property type="entry name" value="IF2_II"/>
</dbReference>
<dbReference type="InterPro" id="IPR006847">
    <property type="entry name" value="IF2_N"/>
</dbReference>
<dbReference type="InterPro" id="IPR027417">
    <property type="entry name" value="P-loop_NTPase"/>
</dbReference>
<dbReference type="InterPro" id="IPR005225">
    <property type="entry name" value="Small_GTP-bd"/>
</dbReference>
<dbReference type="InterPro" id="IPR000795">
    <property type="entry name" value="T_Tr_GTP-bd_dom"/>
</dbReference>
<dbReference type="InterPro" id="IPR000178">
    <property type="entry name" value="TF_IF2_bacterial-like"/>
</dbReference>
<dbReference type="InterPro" id="IPR015760">
    <property type="entry name" value="TIF_IF2"/>
</dbReference>
<dbReference type="InterPro" id="IPR023115">
    <property type="entry name" value="TIF_IF2_dom3"/>
</dbReference>
<dbReference type="InterPro" id="IPR036925">
    <property type="entry name" value="TIF_IF2_dom3_sf"/>
</dbReference>
<dbReference type="InterPro" id="IPR009000">
    <property type="entry name" value="Transl_B-barrel_sf"/>
</dbReference>
<dbReference type="NCBIfam" id="TIGR00487">
    <property type="entry name" value="IF-2"/>
    <property type="match status" value="1"/>
</dbReference>
<dbReference type="NCBIfam" id="TIGR00231">
    <property type="entry name" value="small_GTP"/>
    <property type="match status" value="1"/>
</dbReference>
<dbReference type="PANTHER" id="PTHR43381:SF5">
    <property type="entry name" value="TR-TYPE G DOMAIN-CONTAINING PROTEIN"/>
    <property type="match status" value="1"/>
</dbReference>
<dbReference type="PANTHER" id="PTHR43381">
    <property type="entry name" value="TRANSLATION INITIATION FACTOR IF-2-RELATED"/>
    <property type="match status" value="1"/>
</dbReference>
<dbReference type="Pfam" id="PF22042">
    <property type="entry name" value="EF-G_D2"/>
    <property type="match status" value="1"/>
</dbReference>
<dbReference type="Pfam" id="PF00009">
    <property type="entry name" value="GTP_EFTU"/>
    <property type="match status" value="1"/>
</dbReference>
<dbReference type="Pfam" id="PF11987">
    <property type="entry name" value="IF-2"/>
    <property type="match status" value="1"/>
</dbReference>
<dbReference type="Pfam" id="PF04760">
    <property type="entry name" value="IF2_N"/>
    <property type="match status" value="2"/>
</dbReference>
<dbReference type="PRINTS" id="PR00315">
    <property type="entry name" value="ELONGATNFCT"/>
</dbReference>
<dbReference type="SUPFAM" id="SSF52156">
    <property type="entry name" value="Initiation factor IF2/eIF5b, domain 3"/>
    <property type="match status" value="1"/>
</dbReference>
<dbReference type="SUPFAM" id="SSF52540">
    <property type="entry name" value="P-loop containing nucleoside triphosphate hydrolases"/>
    <property type="match status" value="1"/>
</dbReference>
<dbReference type="SUPFAM" id="SSF50447">
    <property type="entry name" value="Translation proteins"/>
    <property type="match status" value="2"/>
</dbReference>
<dbReference type="PROSITE" id="PS51722">
    <property type="entry name" value="G_TR_2"/>
    <property type="match status" value="1"/>
</dbReference>
<dbReference type="PROSITE" id="PS01176">
    <property type="entry name" value="IF2"/>
    <property type="match status" value="1"/>
</dbReference>
<protein>
    <recommendedName>
        <fullName evidence="2">Translation initiation factor IF-2</fullName>
    </recommendedName>
</protein>
<reference key="1">
    <citation type="journal article" date="2003" name="Nature">
        <title>Genome divergence in two Prochlorococcus ecotypes reflects oceanic niche differentiation.</title>
        <authorList>
            <person name="Rocap G."/>
            <person name="Larimer F.W."/>
            <person name="Lamerdin J.E."/>
            <person name="Malfatti S."/>
            <person name="Chain P."/>
            <person name="Ahlgren N.A."/>
            <person name="Arellano A."/>
            <person name="Coleman M."/>
            <person name="Hauser L."/>
            <person name="Hess W.R."/>
            <person name="Johnson Z.I."/>
            <person name="Land M.L."/>
            <person name="Lindell D."/>
            <person name="Post A.F."/>
            <person name="Regala W."/>
            <person name="Shah M."/>
            <person name="Shaw S.L."/>
            <person name="Steglich C."/>
            <person name="Sullivan M.B."/>
            <person name="Ting C.S."/>
            <person name="Tolonen A."/>
            <person name="Webb E.A."/>
            <person name="Zinser E.R."/>
            <person name="Chisholm S.W."/>
        </authorList>
    </citation>
    <scope>NUCLEOTIDE SEQUENCE [LARGE SCALE GENOMIC DNA]</scope>
    <source>
        <strain>CCMP1986 / NIES-2087 / MED4</strain>
    </source>
</reference>
<sequence length="1169" mass="127148">MTISDKIRVYELSRDLKLENKDILDAAQKLSISVKSHSSSISLEDAKKIKNLINKNSSKKILSVSKSAIKAKNENPKNNDNKNNKNFSNPSHPEKLSKEGLNKKPLLIKPTNKVVNSLVSSNIKNPNPPTIVSNLKSQALSKNQNKTNTSVITTPNLKDKKNPSALQDKKPLKNSSGSPAKTTARPPIQLIEKPKNLANSNRNINANKINNSVNQKAQSLNRADNNKLSRADNNNFPKKNLNSPNVKSTPELVGAPIRREDPKINTNRPNSNSRQPSSNTQISANRPGGQNRQGVPNREGGPYRQGSPNRPGTPYRQGAPNRPGGQNRQGVPNREGGGPYRQGSPNRPGTPNRPGTPYRQGAPNRPGGQNRQGVPNREGGGPYRQGSPNRPGTPYRQGASGIRKPVAPNELMQLQKTNASNKEKPNISNVNKQKIEGANQKTKAPNSRLNTSPSPTAKKPARSFASNTKKPGRTDWDDSAKLEALRNKNPQKQRQKVHIIGENDDSLTSETSGYSGEKVSILSASLARPKKEKSEEIKSQKPSKQFKKKKKETTRQRQKRRAMELRAAKDAKQVRPEMIIIPEDNLTVQELADKLSLESSEIIKSLFFKGITATVTQSLDLATIETVAEEFGVPVLQDDVQEAAKKTVDMIETDDIESLIKRPPVITVMGHVDHGKTSLLDSIRESRVASGEAGGITQHIGAYQVEFEHESKKKKLTFLDTPGHEAFTAMRARGTKVTDVAVLVVAADDGCRPQTLEAISHARAAKVPIVVAINKIDKEGASPDRVKQELSEKDLIAEDWGGDVVMVPVSAIKKQNIDKLLEMILLVSEVEDLQANPERLAKGTVIEAHLDKAKGPVATLLVQNGTLKAGDVLAAGSVLGKIRAMVDEHGNRIKEAGPSCPVEALGFSEVPTAGDEFEVYRDEKSARAIVGDRATDARATKLAQQMASRRVSLSSLSTQANDGELKELNLILKADVQGSVEAILGSLEQLPKNEVQVRVLLSAPGEITETDIDLAAASGSVIIGFNTSLASGAKRAADANDVDIREYEVIYKLLEDIQSAMEGLLEPDLVEESLGQAEVRATFAVGKGAIAGCYIQSGKLQRNCSLRVLRSDKVIFEGNLDSLKRSKDDVKEVNTGFECGVGCDKFSTWSEGDIISAFKFVTKKRTLNK</sequence>